<dbReference type="EC" id="3.4.13.21" evidence="1"/>
<dbReference type="EMBL" id="BA000020">
    <property type="protein sequence ID" value="BAB78268.1"/>
    <property type="status" value="ALT_FRAME"/>
    <property type="molecule type" value="Genomic_DNA"/>
</dbReference>
<dbReference type="PIR" id="AH2500">
    <property type="entry name" value="AH2500"/>
</dbReference>
<dbReference type="SMR" id="P58493"/>
<dbReference type="MEROPS" id="S51.001"/>
<dbReference type="KEGG" id="ana:alr7184"/>
<dbReference type="OrthoDB" id="10052168at2759"/>
<dbReference type="Proteomes" id="UP000002483">
    <property type="component" value="Plasmid pCC7120alpha"/>
</dbReference>
<dbReference type="GO" id="GO:0005737">
    <property type="term" value="C:cytoplasm"/>
    <property type="evidence" value="ECO:0007669"/>
    <property type="project" value="UniProtKB-SubCell"/>
</dbReference>
<dbReference type="GO" id="GO:0016805">
    <property type="term" value="F:dipeptidase activity"/>
    <property type="evidence" value="ECO:0007669"/>
    <property type="project" value="UniProtKB-UniRule"/>
</dbReference>
<dbReference type="GO" id="GO:0008236">
    <property type="term" value="F:serine-type peptidase activity"/>
    <property type="evidence" value="ECO:0007669"/>
    <property type="project" value="UniProtKB-KW"/>
</dbReference>
<dbReference type="GO" id="GO:0006508">
    <property type="term" value="P:proteolysis"/>
    <property type="evidence" value="ECO:0007669"/>
    <property type="project" value="UniProtKB-UniRule"/>
</dbReference>
<dbReference type="CDD" id="cd03146">
    <property type="entry name" value="GAT1_Peptidase_E"/>
    <property type="match status" value="1"/>
</dbReference>
<dbReference type="FunFam" id="3.40.50.880:FF:000007">
    <property type="entry name" value="Peptidase E"/>
    <property type="match status" value="1"/>
</dbReference>
<dbReference type="Gene3D" id="3.40.50.880">
    <property type="match status" value="1"/>
</dbReference>
<dbReference type="HAMAP" id="MF_00510">
    <property type="entry name" value="Peptidase_E"/>
    <property type="match status" value="1"/>
</dbReference>
<dbReference type="InterPro" id="IPR029062">
    <property type="entry name" value="Class_I_gatase-like"/>
</dbReference>
<dbReference type="InterPro" id="IPR005320">
    <property type="entry name" value="Peptidase_S51"/>
</dbReference>
<dbReference type="InterPro" id="IPR023172">
    <property type="entry name" value="Peptidase_S51_dipeptidase-E"/>
</dbReference>
<dbReference type="NCBIfam" id="NF003642">
    <property type="entry name" value="PRK05282.1"/>
    <property type="match status" value="1"/>
</dbReference>
<dbReference type="PANTHER" id="PTHR20842:SF0">
    <property type="entry name" value="ALPHA-ASPARTYL DIPEPTIDASE"/>
    <property type="match status" value="1"/>
</dbReference>
<dbReference type="PANTHER" id="PTHR20842">
    <property type="entry name" value="PROTEASE S51 ALPHA-ASPARTYL DIPEPTIDASE"/>
    <property type="match status" value="1"/>
</dbReference>
<dbReference type="Pfam" id="PF03575">
    <property type="entry name" value="Peptidase_S51"/>
    <property type="match status" value="1"/>
</dbReference>
<dbReference type="SUPFAM" id="SSF52317">
    <property type="entry name" value="Class I glutamine amidotransferase-like"/>
    <property type="match status" value="1"/>
</dbReference>
<geneLocation type="plasmid">
    <name>pCC7120alpha</name>
</geneLocation>
<evidence type="ECO:0000255" key="1">
    <source>
        <dbReference type="HAMAP-Rule" id="MF_00510"/>
    </source>
</evidence>
<evidence type="ECO:0000305" key="2"/>
<sequence>MSKRLLLLSNSTNIGEEYLFYARQEIKNFLGSSVKKIAFIPFAAVTSTYQHYSEKVRKVFQDIGYEFDAIHLVESSHELIKNAEAVVVGGGNTFHLIHCLHETKLLDDIRNKVSNGTPYIGWSAGSNVACPTIKTSNDMPIIEPISFQGLNLVPFQINPHYTNAVIPNHNGETREQRLEDFLVLNPDIYVVGLPEGTMLKIEDSSIRLIGNKTIYLFKFGEEKQEYYPHDNLDFLLERASFT</sequence>
<gene>
    <name evidence="1" type="primary">pepE</name>
    <name type="ordered locus">alr7184</name>
</gene>
<protein>
    <recommendedName>
        <fullName evidence="1">Peptidase E</fullName>
        <ecNumber evidence="1">3.4.13.21</ecNumber>
    </recommendedName>
    <alternativeName>
        <fullName evidence="1">Alpha-aspartyl dipeptidase</fullName>
    </alternativeName>
    <alternativeName>
        <fullName evidence="1">Asp-specific dipeptidase</fullName>
    </alternativeName>
    <alternativeName>
        <fullName evidence="1">Dipeptidase E</fullName>
    </alternativeName>
</protein>
<accession>P58493</accession>
<proteinExistence type="inferred from homology"/>
<organism>
    <name type="scientific">Nostoc sp. (strain PCC 7120 / SAG 25.82 / UTEX 2576)</name>
    <dbReference type="NCBI Taxonomy" id="103690"/>
    <lineage>
        <taxon>Bacteria</taxon>
        <taxon>Bacillati</taxon>
        <taxon>Cyanobacteriota</taxon>
        <taxon>Cyanophyceae</taxon>
        <taxon>Nostocales</taxon>
        <taxon>Nostocaceae</taxon>
        <taxon>Nostoc</taxon>
    </lineage>
</organism>
<feature type="chain" id="PRO_0000209954" description="Peptidase E">
    <location>
        <begin position="1"/>
        <end position="242"/>
    </location>
</feature>
<feature type="active site" description="Charge relay system" evidence="1">
    <location>
        <position position="123"/>
    </location>
</feature>
<feature type="active site" description="Charge relay system" evidence="1">
    <location>
        <position position="138"/>
    </location>
</feature>
<feature type="active site" description="Charge relay system" evidence="1">
    <location>
        <position position="160"/>
    </location>
</feature>
<keyword id="KW-0963">Cytoplasm</keyword>
<keyword id="KW-0224">Dipeptidase</keyword>
<keyword id="KW-0378">Hydrolase</keyword>
<keyword id="KW-0614">Plasmid</keyword>
<keyword id="KW-0645">Protease</keyword>
<keyword id="KW-1185">Reference proteome</keyword>
<keyword id="KW-0720">Serine protease</keyword>
<name>PEPE_NOSS1</name>
<reference key="1">
    <citation type="journal article" date="2001" name="DNA Res.">
        <title>Complete genomic sequence of the filamentous nitrogen-fixing cyanobacterium Anabaena sp. strain PCC 7120.</title>
        <authorList>
            <person name="Kaneko T."/>
            <person name="Nakamura Y."/>
            <person name="Wolk C.P."/>
            <person name="Kuritz T."/>
            <person name="Sasamoto S."/>
            <person name="Watanabe A."/>
            <person name="Iriguchi M."/>
            <person name="Ishikawa A."/>
            <person name="Kawashima K."/>
            <person name="Kimura T."/>
            <person name="Kishida Y."/>
            <person name="Kohara M."/>
            <person name="Matsumoto M."/>
            <person name="Matsuno A."/>
            <person name="Muraki A."/>
            <person name="Nakazaki N."/>
            <person name="Shimpo S."/>
            <person name="Sugimoto M."/>
            <person name="Takazawa M."/>
            <person name="Yamada M."/>
            <person name="Yasuda M."/>
            <person name="Tabata S."/>
        </authorList>
    </citation>
    <scope>NUCLEOTIDE SEQUENCE [LARGE SCALE GENOMIC DNA]</scope>
    <source>
        <strain>PCC 7120 / SAG 25.82 / UTEX 2576</strain>
    </source>
</reference>
<comment type="function">
    <text evidence="1">Hydrolyzes dipeptides containing N-terminal aspartate residues. May play a role in allowing the cell to use peptide aspartate to spare carbon otherwise required for the synthesis of the aspartate family of amino acids.</text>
</comment>
<comment type="catalytic activity">
    <reaction evidence="1">
        <text>Dipeptidase E catalyzes the hydrolysis of dipeptides Asp-|-Xaa. It does not act on peptides with N-terminal Glu, Asn or Gln, nor does it cleave isoaspartyl peptides.</text>
        <dbReference type="EC" id="3.4.13.21"/>
    </reaction>
</comment>
<comment type="subcellular location">
    <subcellularLocation>
        <location evidence="1">Cytoplasm</location>
    </subcellularLocation>
</comment>
<comment type="similarity">
    <text evidence="1">Belongs to the peptidase S51 family.</text>
</comment>
<comment type="sequence caution" evidence="2">
    <conflict type="frameshift">
        <sequence resource="EMBL-CDS" id="BAB78268"/>
    </conflict>
</comment>